<protein>
    <recommendedName>
        <fullName evidence="1">Large ribosomal subunit protein uL13</fullName>
    </recommendedName>
    <alternativeName>
        <fullName evidence="2">50S ribosomal protein L13</fullName>
    </alternativeName>
</protein>
<proteinExistence type="inferred from homology"/>
<organism>
    <name type="scientific">Prosthecochloris aestuarii (strain DSM 271 / SK 413)</name>
    <dbReference type="NCBI Taxonomy" id="290512"/>
    <lineage>
        <taxon>Bacteria</taxon>
        <taxon>Pseudomonadati</taxon>
        <taxon>Chlorobiota</taxon>
        <taxon>Chlorobiia</taxon>
        <taxon>Chlorobiales</taxon>
        <taxon>Chlorobiaceae</taxon>
        <taxon>Prosthecochloris</taxon>
    </lineage>
</organism>
<feature type="chain" id="PRO_1000144164" description="Large ribosomal subunit protein uL13">
    <location>
        <begin position="1"/>
        <end position="149"/>
    </location>
</feature>
<gene>
    <name evidence="1" type="primary">rplM</name>
    <name type="ordered locus">Paes_1812</name>
</gene>
<comment type="function">
    <text evidence="1">This protein is one of the early assembly proteins of the 50S ribosomal subunit, although it is not seen to bind rRNA by itself. It is important during the early stages of 50S assembly.</text>
</comment>
<comment type="subunit">
    <text evidence="1">Part of the 50S ribosomal subunit.</text>
</comment>
<comment type="similarity">
    <text evidence="1">Belongs to the universal ribosomal protein uL13 family.</text>
</comment>
<accession>B4S432</accession>
<name>RL13_PROA2</name>
<dbReference type="EMBL" id="CP001108">
    <property type="protein sequence ID" value="ACF46824.1"/>
    <property type="molecule type" value="Genomic_DNA"/>
</dbReference>
<dbReference type="RefSeq" id="WP_012506357.1">
    <property type="nucleotide sequence ID" value="NC_011059.1"/>
</dbReference>
<dbReference type="SMR" id="B4S432"/>
<dbReference type="STRING" id="290512.Paes_1812"/>
<dbReference type="KEGG" id="paa:Paes_1812"/>
<dbReference type="eggNOG" id="COG0102">
    <property type="taxonomic scope" value="Bacteria"/>
</dbReference>
<dbReference type="HOGENOM" id="CLU_082184_2_2_10"/>
<dbReference type="Proteomes" id="UP000002725">
    <property type="component" value="Chromosome"/>
</dbReference>
<dbReference type="GO" id="GO:0022625">
    <property type="term" value="C:cytosolic large ribosomal subunit"/>
    <property type="evidence" value="ECO:0007669"/>
    <property type="project" value="TreeGrafter"/>
</dbReference>
<dbReference type="GO" id="GO:0003729">
    <property type="term" value="F:mRNA binding"/>
    <property type="evidence" value="ECO:0007669"/>
    <property type="project" value="TreeGrafter"/>
</dbReference>
<dbReference type="GO" id="GO:0003735">
    <property type="term" value="F:structural constituent of ribosome"/>
    <property type="evidence" value="ECO:0007669"/>
    <property type="project" value="InterPro"/>
</dbReference>
<dbReference type="GO" id="GO:0017148">
    <property type="term" value="P:negative regulation of translation"/>
    <property type="evidence" value="ECO:0007669"/>
    <property type="project" value="TreeGrafter"/>
</dbReference>
<dbReference type="GO" id="GO:0006412">
    <property type="term" value="P:translation"/>
    <property type="evidence" value="ECO:0007669"/>
    <property type="project" value="UniProtKB-UniRule"/>
</dbReference>
<dbReference type="CDD" id="cd00392">
    <property type="entry name" value="Ribosomal_L13"/>
    <property type="match status" value="1"/>
</dbReference>
<dbReference type="FunFam" id="3.90.1180.10:FF:000001">
    <property type="entry name" value="50S ribosomal protein L13"/>
    <property type="match status" value="1"/>
</dbReference>
<dbReference type="Gene3D" id="3.90.1180.10">
    <property type="entry name" value="Ribosomal protein L13"/>
    <property type="match status" value="1"/>
</dbReference>
<dbReference type="HAMAP" id="MF_01366">
    <property type="entry name" value="Ribosomal_uL13"/>
    <property type="match status" value="1"/>
</dbReference>
<dbReference type="InterPro" id="IPR005822">
    <property type="entry name" value="Ribosomal_uL13"/>
</dbReference>
<dbReference type="InterPro" id="IPR005823">
    <property type="entry name" value="Ribosomal_uL13_bac-type"/>
</dbReference>
<dbReference type="InterPro" id="IPR036899">
    <property type="entry name" value="Ribosomal_uL13_sf"/>
</dbReference>
<dbReference type="NCBIfam" id="TIGR01066">
    <property type="entry name" value="rplM_bact"/>
    <property type="match status" value="1"/>
</dbReference>
<dbReference type="PANTHER" id="PTHR11545:SF2">
    <property type="entry name" value="LARGE RIBOSOMAL SUBUNIT PROTEIN UL13M"/>
    <property type="match status" value="1"/>
</dbReference>
<dbReference type="PANTHER" id="PTHR11545">
    <property type="entry name" value="RIBOSOMAL PROTEIN L13"/>
    <property type="match status" value="1"/>
</dbReference>
<dbReference type="Pfam" id="PF00572">
    <property type="entry name" value="Ribosomal_L13"/>
    <property type="match status" value="1"/>
</dbReference>
<dbReference type="PIRSF" id="PIRSF002181">
    <property type="entry name" value="Ribosomal_L13"/>
    <property type="match status" value="1"/>
</dbReference>
<dbReference type="SUPFAM" id="SSF52161">
    <property type="entry name" value="Ribosomal protein L13"/>
    <property type="match status" value="1"/>
</dbReference>
<evidence type="ECO:0000255" key="1">
    <source>
        <dbReference type="HAMAP-Rule" id="MF_01366"/>
    </source>
</evidence>
<evidence type="ECO:0000305" key="2"/>
<reference key="1">
    <citation type="submission" date="2008-06" db="EMBL/GenBank/DDBJ databases">
        <title>Complete sequence of chromosome of Prosthecochloris aestuarii DSM 271.</title>
        <authorList>
            <consortium name="US DOE Joint Genome Institute"/>
            <person name="Lucas S."/>
            <person name="Copeland A."/>
            <person name="Lapidus A."/>
            <person name="Glavina del Rio T."/>
            <person name="Dalin E."/>
            <person name="Tice H."/>
            <person name="Bruce D."/>
            <person name="Goodwin L."/>
            <person name="Pitluck S."/>
            <person name="Schmutz J."/>
            <person name="Larimer F."/>
            <person name="Land M."/>
            <person name="Hauser L."/>
            <person name="Kyrpides N."/>
            <person name="Anderson I."/>
            <person name="Liu Z."/>
            <person name="Li T."/>
            <person name="Zhao F."/>
            <person name="Overmann J."/>
            <person name="Bryant D.A."/>
            <person name="Richardson P."/>
        </authorList>
    </citation>
    <scope>NUCLEOTIDE SEQUENCE [LARGE SCALE GENOMIC DNA]</scope>
    <source>
        <strain>DSM 271 / SK 413</strain>
    </source>
</reference>
<keyword id="KW-0687">Ribonucleoprotein</keyword>
<keyword id="KW-0689">Ribosomal protein</keyword>
<sequence>MSNTLSFKTYSAKPGEVVRKWYIVDAEGKVLGRLASEIAKVLRGKHKAQFTPHIDTGDFVIVTNAEKIGLSGKKMDQKTYFSHSNYPGGVRIDNVKDVLQKKPEQVIEKAVWGMLPHNNLGRQLFKKLKVYKGTEHPHAAQCPVEMNVN</sequence>